<dbReference type="EMBL" id="CP000316">
    <property type="protein sequence ID" value="ABE42460.1"/>
    <property type="molecule type" value="Genomic_DNA"/>
</dbReference>
<dbReference type="SMR" id="Q12G82"/>
<dbReference type="STRING" id="296591.Bpro_0496"/>
<dbReference type="KEGG" id="pol:Bpro_0496"/>
<dbReference type="eggNOG" id="COG0361">
    <property type="taxonomic scope" value="Bacteria"/>
</dbReference>
<dbReference type="HOGENOM" id="CLU_151267_1_0_4"/>
<dbReference type="OrthoDB" id="9803250at2"/>
<dbReference type="Proteomes" id="UP000001983">
    <property type="component" value="Chromosome"/>
</dbReference>
<dbReference type="GO" id="GO:0005829">
    <property type="term" value="C:cytosol"/>
    <property type="evidence" value="ECO:0007669"/>
    <property type="project" value="TreeGrafter"/>
</dbReference>
<dbReference type="GO" id="GO:0043022">
    <property type="term" value="F:ribosome binding"/>
    <property type="evidence" value="ECO:0007669"/>
    <property type="project" value="UniProtKB-UniRule"/>
</dbReference>
<dbReference type="GO" id="GO:0019843">
    <property type="term" value="F:rRNA binding"/>
    <property type="evidence" value="ECO:0007669"/>
    <property type="project" value="UniProtKB-UniRule"/>
</dbReference>
<dbReference type="GO" id="GO:0003743">
    <property type="term" value="F:translation initiation factor activity"/>
    <property type="evidence" value="ECO:0007669"/>
    <property type="project" value="UniProtKB-UniRule"/>
</dbReference>
<dbReference type="CDD" id="cd04451">
    <property type="entry name" value="S1_IF1"/>
    <property type="match status" value="1"/>
</dbReference>
<dbReference type="FunFam" id="2.40.50.140:FF:000002">
    <property type="entry name" value="Translation initiation factor IF-1"/>
    <property type="match status" value="1"/>
</dbReference>
<dbReference type="Gene3D" id="2.40.50.140">
    <property type="entry name" value="Nucleic acid-binding proteins"/>
    <property type="match status" value="1"/>
</dbReference>
<dbReference type="HAMAP" id="MF_00075">
    <property type="entry name" value="IF_1"/>
    <property type="match status" value="1"/>
</dbReference>
<dbReference type="InterPro" id="IPR012340">
    <property type="entry name" value="NA-bd_OB-fold"/>
</dbReference>
<dbReference type="InterPro" id="IPR006196">
    <property type="entry name" value="RNA-binding_domain_S1_IF1"/>
</dbReference>
<dbReference type="InterPro" id="IPR003029">
    <property type="entry name" value="S1_domain"/>
</dbReference>
<dbReference type="InterPro" id="IPR004368">
    <property type="entry name" value="TIF_IF1"/>
</dbReference>
<dbReference type="NCBIfam" id="TIGR00008">
    <property type="entry name" value="infA"/>
    <property type="match status" value="1"/>
</dbReference>
<dbReference type="PANTHER" id="PTHR33370">
    <property type="entry name" value="TRANSLATION INITIATION FACTOR IF-1, CHLOROPLASTIC"/>
    <property type="match status" value="1"/>
</dbReference>
<dbReference type="PANTHER" id="PTHR33370:SF1">
    <property type="entry name" value="TRANSLATION INITIATION FACTOR IF-1, CHLOROPLASTIC"/>
    <property type="match status" value="1"/>
</dbReference>
<dbReference type="Pfam" id="PF01176">
    <property type="entry name" value="eIF-1a"/>
    <property type="match status" value="1"/>
</dbReference>
<dbReference type="SMART" id="SM00316">
    <property type="entry name" value="S1"/>
    <property type="match status" value="1"/>
</dbReference>
<dbReference type="SUPFAM" id="SSF50249">
    <property type="entry name" value="Nucleic acid-binding proteins"/>
    <property type="match status" value="1"/>
</dbReference>
<dbReference type="PROSITE" id="PS50832">
    <property type="entry name" value="S1_IF1_TYPE"/>
    <property type="match status" value="1"/>
</dbReference>
<evidence type="ECO:0000255" key="1">
    <source>
        <dbReference type="HAMAP-Rule" id="MF_00075"/>
    </source>
</evidence>
<protein>
    <recommendedName>
        <fullName evidence="1">Translation initiation factor IF-1 1</fullName>
    </recommendedName>
</protein>
<proteinExistence type="inferred from homology"/>
<name>IF11_POLSJ</name>
<keyword id="KW-0963">Cytoplasm</keyword>
<keyword id="KW-0396">Initiation factor</keyword>
<keyword id="KW-0648">Protein biosynthesis</keyword>
<keyword id="KW-1185">Reference proteome</keyword>
<keyword id="KW-0694">RNA-binding</keyword>
<keyword id="KW-0699">rRNA-binding</keyword>
<sequence>MSKDDVIQMQGEVVENLPNATFRVKLENGHVVLGHISGKMRMHYIRILPGDKVTVELTPYDLSRARIVFRAK</sequence>
<gene>
    <name evidence="1" type="primary">infA1</name>
    <name type="ordered locus">Bpro_0496</name>
</gene>
<organism>
    <name type="scientific">Polaromonas sp. (strain JS666 / ATCC BAA-500)</name>
    <dbReference type="NCBI Taxonomy" id="296591"/>
    <lineage>
        <taxon>Bacteria</taxon>
        <taxon>Pseudomonadati</taxon>
        <taxon>Pseudomonadota</taxon>
        <taxon>Betaproteobacteria</taxon>
        <taxon>Burkholderiales</taxon>
        <taxon>Comamonadaceae</taxon>
        <taxon>Polaromonas</taxon>
    </lineage>
</organism>
<accession>Q12G82</accession>
<comment type="function">
    <text evidence="1">One of the essential components for the initiation of protein synthesis. Stabilizes the binding of IF-2 and IF-3 on the 30S subunit to which N-formylmethionyl-tRNA(fMet) subsequently binds. Helps modulate mRNA selection, yielding the 30S pre-initiation complex (PIC). Upon addition of the 50S ribosomal subunit IF-1, IF-2 and IF-3 are released leaving the mature 70S translation initiation complex.</text>
</comment>
<comment type="subunit">
    <text evidence="1">Component of the 30S ribosomal translation pre-initiation complex which assembles on the 30S ribosome in the order IF-2 and IF-3, IF-1 and N-formylmethionyl-tRNA(fMet); mRNA recruitment can occur at any time during PIC assembly.</text>
</comment>
<comment type="subcellular location">
    <subcellularLocation>
        <location evidence="1">Cytoplasm</location>
    </subcellularLocation>
</comment>
<comment type="similarity">
    <text evidence="1">Belongs to the IF-1 family.</text>
</comment>
<reference key="1">
    <citation type="journal article" date="2008" name="Appl. Environ. Microbiol.">
        <title>The genome of Polaromonas sp. strain JS666: insights into the evolution of a hydrocarbon- and xenobiotic-degrading bacterium, and features of relevance to biotechnology.</title>
        <authorList>
            <person name="Mattes T.E."/>
            <person name="Alexander A.K."/>
            <person name="Richardson P.M."/>
            <person name="Munk A.C."/>
            <person name="Han C.S."/>
            <person name="Stothard P."/>
            <person name="Coleman N.V."/>
        </authorList>
    </citation>
    <scope>NUCLEOTIDE SEQUENCE [LARGE SCALE GENOMIC DNA]</scope>
    <source>
        <strain>JS666 / ATCC BAA-500</strain>
    </source>
</reference>
<feature type="chain" id="PRO_0000263836" description="Translation initiation factor IF-1 1">
    <location>
        <begin position="1"/>
        <end position="72"/>
    </location>
</feature>
<feature type="domain" description="S1-like" evidence="1">
    <location>
        <begin position="1"/>
        <end position="72"/>
    </location>
</feature>